<feature type="chain" id="PRO_0000096590" description="Multicopy suppressor of chk1 protein 1">
    <location>
        <begin position="1"/>
        <end position="1588"/>
    </location>
</feature>
<feature type="domain" description="JmjN" evidence="2">
    <location>
        <begin position="82"/>
        <end position="124"/>
    </location>
</feature>
<feature type="domain" description="JmjC" evidence="3">
    <location>
        <begin position="475"/>
        <end position="645"/>
    </location>
</feature>
<feature type="zinc finger region" description="PHD-type 1" evidence="1">
    <location>
        <begin position="298"/>
        <end position="345"/>
    </location>
</feature>
<feature type="zinc finger region" description="PHD-type 2" evidence="1">
    <location>
        <begin position="1171"/>
        <end position="1220"/>
    </location>
</feature>
<feature type="zinc finger region" description="PHD-type 3" evidence="1">
    <location>
        <begin position="1454"/>
        <end position="1505"/>
    </location>
</feature>
<feature type="region of interest" description="Disordered" evidence="4">
    <location>
        <begin position="38"/>
        <end position="60"/>
    </location>
</feature>
<feature type="region of interest" description="Disordered" evidence="4">
    <location>
        <begin position="385"/>
        <end position="412"/>
    </location>
</feature>
<feature type="region of interest" description="Disordered" evidence="4">
    <location>
        <begin position="848"/>
        <end position="872"/>
    </location>
</feature>
<feature type="region of interest" description="Disordered" evidence="4">
    <location>
        <begin position="1319"/>
        <end position="1341"/>
    </location>
</feature>
<feature type="compositionally biased region" description="Polar residues" evidence="4">
    <location>
        <begin position="51"/>
        <end position="60"/>
    </location>
</feature>
<feature type="compositionally biased region" description="Polar residues" evidence="4">
    <location>
        <begin position="385"/>
        <end position="395"/>
    </location>
</feature>
<evidence type="ECO:0000255" key="1">
    <source>
        <dbReference type="PROSITE-ProRule" id="PRU00146"/>
    </source>
</evidence>
<evidence type="ECO:0000255" key="2">
    <source>
        <dbReference type="PROSITE-ProRule" id="PRU00537"/>
    </source>
</evidence>
<evidence type="ECO:0000255" key="3">
    <source>
        <dbReference type="PROSITE-ProRule" id="PRU00538"/>
    </source>
</evidence>
<evidence type="ECO:0000256" key="4">
    <source>
        <dbReference type="SAM" id="MobiDB-lite"/>
    </source>
</evidence>
<evidence type="ECO:0000269" key="5">
    <source>
    </source>
</evidence>
<reference key="1">
    <citation type="journal article" date="2002" name="Nature">
        <title>The genome sequence of Schizosaccharomyces pombe.</title>
        <authorList>
            <person name="Wood V."/>
            <person name="Gwilliam R."/>
            <person name="Rajandream M.A."/>
            <person name="Lyne M.H."/>
            <person name="Lyne R."/>
            <person name="Stewart A."/>
            <person name="Sgouros J.G."/>
            <person name="Peat N."/>
            <person name="Hayles J."/>
            <person name="Baker S.G."/>
            <person name="Basham D."/>
            <person name="Bowman S."/>
            <person name="Brooks K."/>
            <person name="Brown D."/>
            <person name="Brown S."/>
            <person name="Chillingworth T."/>
            <person name="Churcher C.M."/>
            <person name="Collins M."/>
            <person name="Connor R."/>
            <person name="Cronin A."/>
            <person name="Davis P."/>
            <person name="Feltwell T."/>
            <person name="Fraser A."/>
            <person name="Gentles S."/>
            <person name="Goble A."/>
            <person name="Hamlin N."/>
            <person name="Harris D.E."/>
            <person name="Hidalgo J."/>
            <person name="Hodgson G."/>
            <person name="Holroyd S."/>
            <person name="Hornsby T."/>
            <person name="Howarth S."/>
            <person name="Huckle E.J."/>
            <person name="Hunt S."/>
            <person name="Jagels K."/>
            <person name="James K.D."/>
            <person name="Jones L."/>
            <person name="Jones M."/>
            <person name="Leather S."/>
            <person name="McDonald S."/>
            <person name="McLean J."/>
            <person name="Mooney P."/>
            <person name="Moule S."/>
            <person name="Mungall K.L."/>
            <person name="Murphy L.D."/>
            <person name="Niblett D."/>
            <person name="Odell C."/>
            <person name="Oliver K."/>
            <person name="O'Neil S."/>
            <person name="Pearson D."/>
            <person name="Quail M.A."/>
            <person name="Rabbinowitsch E."/>
            <person name="Rutherford K.M."/>
            <person name="Rutter S."/>
            <person name="Saunders D."/>
            <person name="Seeger K."/>
            <person name="Sharp S."/>
            <person name="Skelton J."/>
            <person name="Simmonds M.N."/>
            <person name="Squares R."/>
            <person name="Squares S."/>
            <person name="Stevens K."/>
            <person name="Taylor K."/>
            <person name="Taylor R.G."/>
            <person name="Tivey A."/>
            <person name="Walsh S.V."/>
            <person name="Warren T."/>
            <person name="Whitehead S."/>
            <person name="Woodward J.R."/>
            <person name="Volckaert G."/>
            <person name="Aert R."/>
            <person name="Robben J."/>
            <person name="Grymonprez B."/>
            <person name="Weltjens I."/>
            <person name="Vanstreels E."/>
            <person name="Rieger M."/>
            <person name="Schaefer M."/>
            <person name="Mueller-Auer S."/>
            <person name="Gabel C."/>
            <person name="Fuchs M."/>
            <person name="Duesterhoeft A."/>
            <person name="Fritzc C."/>
            <person name="Holzer E."/>
            <person name="Moestl D."/>
            <person name="Hilbert H."/>
            <person name="Borzym K."/>
            <person name="Langer I."/>
            <person name="Beck A."/>
            <person name="Lehrach H."/>
            <person name="Reinhardt R."/>
            <person name="Pohl T.M."/>
            <person name="Eger P."/>
            <person name="Zimmermann W."/>
            <person name="Wedler H."/>
            <person name="Wambutt R."/>
            <person name="Purnelle B."/>
            <person name="Goffeau A."/>
            <person name="Cadieu E."/>
            <person name="Dreano S."/>
            <person name="Gloux S."/>
            <person name="Lelaure V."/>
            <person name="Mottier S."/>
            <person name="Galibert F."/>
            <person name="Aves S.J."/>
            <person name="Xiang Z."/>
            <person name="Hunt C."/>
            <person name="Moore K."/>
            <person name="Hurst S.M."/>
            <person name="Lucas M."/>
            <person name="Rochet M."/>
            <person name="Gaillardin C."/>
            <person name="Tallada V.A."/>
            <person name="Garzon A."/>
            <person name="Thode G."/>
            <person name="Daga R.R."/>
            <person name="Cruzado L."/>
            <person name="Jimenez J."/>
            <person name="Sanchez M."/>
            <person name="del Rey F."/>
            <person name="Benito J."/>
            <person name="Dominguez A."/>
            <person name="Revuelta J.L."/>
            <person name="Moreno S."/>
            <person name="Armstrong J."/>
            <person name="Forsburg S.L."/>
            <person name="Cerutti L."/>
            <person name="Lowe T."/>
            <person name="McCombie W.R."/>
            <person name="Paulsen I."/>
            <person name="Potashkin J."/>
            <person name="Shpakovski G.V."/>
            <person name="Ussery D."/>
            <person name="Barrell B.G."/>
            <person name="Nurse P."/>
        </authorList>
    </citation>
    <scope>NUCLEOTIDE SEQUENCE [LARGE SCALE GENOMIC DNA]</scope>
    <source>
        <strain>972 / ATCC 24843</strain>
    </source>
</reference>
<reference key="2">
    <citation type="journal article" date="2004" name="Mol. Cell. Biol.">
        <title>A novel protein with similarities to Rb binding protein 2 compensates for loss of Chk1 function and affects histone modification in fission yeast.</title>
        <authorList>
            <person name="Ahmed S."/>
            <person name="Palermo C."/>
            <person name="Wan S."/>
            <person name="Walworth N.C."/>
        </authorList>
    </citation>
    <scope>FUNCTION</scope>
    <scope>SUBCELLULAR LOCATION</scope>
</reference>
<comment type="function">
    <text evidence="5">Has a role in regulating chromatin structure via global deacetylation of histone H3. This function is associated with the activity of a histone deacetylase.</text>
</comment>
<comment type="subcellular location">
    <subcellularLocation>
        <location evidence="2 5">Nucleus</location>
    </subcellularLocation>
    <text>Associates with chromatin.</text>
</comment>
<organism>
    <name type="scientific">Schizosaccharomyces pombe (strain 972 / ATCC 24843)</name>
    <name type="common">Fission yeast</name>
    <dbReference type="NCBI Taxonomy" id="284812"/>
    <lineage>
        <taxon>Eukaryota</taxon>
        <taxon>Fungi</taxon>
        <taxon>Dikarya</taxon>
        <taxon>Ascomycota</taxon>
        <taxon>Taphrinomycotina</taxon>
        <taxon>Schizosaccharomycetes</taxon>
        <taxon>Schizosaccharomycetales</taxon>
        <taxon>Schizosaccharomycetaceae</taxon>
        <taxon>Schizosaccharomyces</taxon>
    </lineage>
</organism>
<accession>Q9UT79</accession>
<proteinExistence type="inferred from homology"/>
<gene>
    <name type="primary">msc1</name>
    <name type="ORF">SPAC343.11c</name>
</gene>
<sequence>MRKNSSHENQSSENIIEFPYVDFEELNVHSNIFSELEHAKPSTQQQQQQQNISNETTSTGPRICISRDEFKAVNLLTKEEINVRVTPKKEEFSRGLDFISDLYDQTARKSGAVRVIPPDNWKCPLTINTTTFKFLTRKNNPSSMSLVSNYPLDAISSQQKFHGNDKTLEKNSAKATINKSNSTAETSSTATVEPYDSNDLYRIFDRPDAVVLSYIFVLGKAVDLLQIKQWLQLSKQKNLLEFEFWSQAAQHYKLDVNSLRNAYNLYAETGVTTRTGNDGGSPINRPAKRVKRQNHIPKCKLCAQEGSSLVTCCICQSNYHYACVEAPFAPFSDIHYWTCNSCIPSSLKILWKEVDYHCISSFLQSSNELASSLKKQLPSFLAQTPLTLPSNTKTPPASARQSSRRTRSTSGKGFETKISINLDSDIKLLNTLSPLETFFWCCSFPSTASTSSPFSYYPESLPTPLLGRAVNTTAFPTSRQNAYYNDPWNLYFIHFSKLSPLRFTPPGILTSTISLGQPLTCQGWQRDSMSLFGMHYHHYGAQRIWYVIPEVDGPKYEKLLNDLSPSFIQEKPETLIKSKILLPISMLISNGIQVLTFVQNSNEFVITSPNTYYTVLDTGFSLSESVPFATKEWIQDMHAENSFNMYKNLHISAPFSLDHILLANATLDKTVHSAYWLMTCLKDRVDRELTLRNEFRKRHPLLTWIPTPLESSVMACAFCKTFAYLASIEEKNGTKTACLSHKDECFPNTDSDLTVLVRYDDNALLAAYSKVVERAHKADTWLENYKEALGSDNSRPSLKVLKTLLNEAETICCPLQEVSLVRNLVKTAQQWLDKFAIIFKKKSMVKKEKRKPKRGSATHSHLESPSEEVEDLNSSNINEADLLINLVEEAEQFTFDFPEMAVAFEKAESLKIFREKANAMKERSLSYEECLAIVEEGESLQLKTPELLYFKQYMEKTEWIDSFNQISQKTDSTMEELVELIERGEKIGLTSDNENMATALLLKEKSENWMKQVEGLLSQETLSTSKLFQLKSEANSICINRGLLEQLNEVLQKSENFHTQLVSLISRARDPDYYSRPTIEEAKTVLAESENLTNKPEEYTVAQKLLTQTYEWVRRGKRLFGKANAPLEIFNQHLEFVEQRNTNAMVDEGSDAPFHVGNEYYVIAGSDPSDFHYCFCRQPEAGMMIECELCHEWYHAKCMKMSKKKLRADEKFICPICDYRVEVPRHSHRPPLIELQKMVDDIPTLPFQPIEIELLKRVVKQAEEFKNKMQSEVCDPTQLSEKDVPLLQFYLRKLEGSEILFTEELNVFRQKLHEFMPVAPQPPPFIGESRSNRKPRPTKRQREIMEQVESGKLTSAEGAAAIAATQTRNQNNFISKPFNVHTLSTTLSPWAMKSLAQAAISPNPMPSAHDLLPTSNPAELFTNISPEIKELSVDSTSTLGGLNSSHLVSDQNASVICLCRQPFAISDGTVQCHNCLEWFHYECVGLSSDIVSTLSNYACPDCCSKEGKLYPWNTRPRSTPSVWLSQAYSPSVLQGTTENVAFLNKAFSASANLFDVLPVSNTPSHFSKMDYVLEDRKPDLFTETYLSM</sequence>
<protein>
    <recommendedName>
        <fullName>Multicopy suppressor of chk1 protein 1</fullName>
    </recommendedName>
</protein>
<name>MSC1_SCHPO</name>
<keyword id="KW-0479">Metal-binding</keyword>
<keyword id="KW-0539">Nucleus</keyword>
<keyword id="KW-1185">Reference proteome</keyword>
<keyword id="KW-0677">Repeat</keyword>
<keyword id="KW-0862">Zinc</keyword>
<keyword id="KW-0863">Zinc-finger</keyword>
<dbReference type="EMBL" id="CU329670">
    <property type="protein sequence ID" value="CAB52274.1"/>
    <property type="molecule type" value="Genomic_DNA"/>
</dbReference>
<dbReference type="PIR" id="T38660">
    <property type="entry name" value="T38660"/>
</dbReference>
<dbReference type="RefSeq" id="NP_593431.1">
    <property type="nucleotide sequence ID" value="NM_001018864.2"/>
</dbReference>
<dbReference type="SMR" id="Q9UT79"/>
<dbReference type="BioGRID" id="278205">
    <property type="interactions" value="127"/>
</dbReference>
<dbReference type="FunCoup" id="Q9UT79">
    <property type="interactions" value="560"/>
</dbReference>
<dbReference type="IntAct" id="Q9UT79">
    <property type="interactions" value="1"/>
</dbReference>
<dbReference type="STRING" id="284812.Q9UT79"/>
<dbReference type="iPTMnet" id="Q9UT79"/>
<dbReference type="PaxDb" id="4896-SPAC343.11c.1"/>
<dbReference type="EnsemblFungi" id="SPAC343.11c.1">
    <property type="protein sequence ID" value="SPAC343.11c.1:pep"/>
    <property type="gene ID" value="SPAC343.11c"/>
</dbReference>
<dbReference type="GeneID" id="2541710"/>
<dbReference type="KEGG" id="spo:2541710"/>
<dbReference type="PomBase" id="SPAC343.11c">
    <property type="gene designation" value="msc1"/>
</dbReference>
<dbReference type="VEuPathDB" id="FungiDB:SPAC343.11c"/>
<dbReference type="eggNOG" id="KOG1246">
    <property type="taxonomic scope" value="Eukaryota"/>
</dbReference>
<dbReference type="HOGENOM" id="CLU_247392_0_0_1"/>
<dbReference type="InParanoid" id="Q9UT79"/>
<dbReference type="OMA" id="CKTTLFM"/>
<dbReference type="PhylomeDB" id="Q9UT79"/>
<dbReference type="Reactome" id="R-SPO-3214842">
    <property type="pathway name" value="HDMs demethylate histones"/>
</dbReference>
<dbReference type="PRO" id="PR:Q9UT79"/>
<dbReference type="Proteomes" id="UP000002485">
    <property type="component" value="Chromosome I"/>
</dbReference>
<dbReference type="GO" id="GO:0000785">
    <property type="term" value="C:chromatin"/>
    <property type="evidence" value="ECO:0000314"/>
    <property type="project" value="PomBase"/>
</dbReference>
<dbReference type="GO" id="GO:0000118">
    <property type="term" value="C:histone deacetylase complex"/>
    <property type="evidence" value="ECO:0000314"/>
    <property type="project" value="PomBase"/>
</dbReference>
<dbReference type="GO" id="GO:0005634">
    <property type="term" value="C:nucleus"/>
    <property type="evidence" value="ECO:0000318"/>
    <property type="project" value="GO_Central"/>
</dbReference>
<dbReference type="GO" id="GO:0000812">
    <property type="term" value="C:Swr1 complex"/>
    <property type="evidence" value="ECO:0000314"/>
    <property type="project" value="PomBase"/>
</dbReference>
<dbReference type="GO" id="GO:0008270">
    <property type="term" value="F:zinc ion binding"/>
    <property type="evidence" value="ECO:0007669"/>
    <property type="project" value="UniProtKB-KW"/>
</dbReference>
<dbReference type="GO" id="GO:0006338">
    <property type="term" value="P:chromatin remodeling"/>
    <property type="evidence" value="ECO:0000353"/>
    <property type="project" value="PomBase"/>
</dbReference>
<dbReference type="GO" id="GO:0070828">
    <property type="term" value="P:heterochromatin organization"/>
    <property type="evidence" value="ECO:0000269"/>
    <property type="project" value="PomBase"/>
</dbReference>
<dbReference type="GO" id="GO:0007533">
    <property type="term" value="P:mating type switching"/>
    <property type="evidence" value="ECO:0000315"/>
    <property type="project" value="PomBase"/>
</dbReference>
<dbReference type="GO" id="GO:0010468">
    <property type="term" value="P:regulation of gene expression"/>
    <property type="evidence" value="ECO:0000318"/>
    <property type="project" value="GO_Central"/>
</dbReference>
<dbReference type="GO" id="GO:0045815">
    <property type="term" value="P:transcription initiation-coupled chromatin remodeling"/>
    <property type="evidence" value="ECO:0000305"/>
    <property type="project" value="PomBase"/>
</dbReference>
<dbReference type="CDD" id="cd15518">
    <property type="entry name" value="PHD_Ecm5p_Lid2p_like"/>
    <property type="match status" value="1"/>
</dbReference>
<dbReference type="CDD" id="cd15489">
    <property type="entry name" value="PHD_SF"/>
    <property type="match status" value="1"/>
</dbReference>
<dbReference type="FunFam" id="3.30.40.10:FF:001132">
    <property type="entry name" value="Multicopy suppressor of chk1 protein 1"/>
    <property type="match status" value="1"/>
</dbReference>
<dbReference type="Gene3D" id="2.60.120.650">
    <property type="entry name" value="Cupin"/>
    <property type="match status" value="2"/>
</dbReference>
<dbReference type="Gene3D" id="3.30.40.10">
    <property type="entry name" value="Zinc/RING finger domain, C3HC4 (zinc finger)"/>
    <property type="match status" value="3"/>
</dbReference>
<dbReference type="InterPro" id="IPR003347">
    <property type="entry name" value="JmjC_dom"/>
</dbReference>
<dbReference type="InterPro" id="IPR003349">
    <property type="entry name" value="JmjN"/>
</dbReference>
<dbReference type="InterPro" id="IPR013637">
    <property type="entry name" value="Lys_sp_deMease-like_dom"/>
</dbReference>
<dbReference type="InterPro" id="IPR019786">
    <property type="entry name" value="Zinc_finger_PHD-type_CS"/>
</dbReference>
<dbReference type="InterPro" id="IPR004198">
    <property type="entry name" value="Znf_C5HC2"/>
</dbReference>
<dbReference type="InterPro" id="IPR011011">
    <property type="entry name" value="Znf_FYVE_PHD"/>
</dbReference>
<dbReference type="InterPro" id="IPR001965">
    <property type="entry name" value="Znf_PHD"/>
</dbReference>
<dbReference type="InterPro" id="IPR019787">
    <property type="entry name" value="Znf_PHD-finger"/>
</dbReference>
<dbReference type="InterPro" id="IPR013083">
    <property type="entry name" value="Znf_RING/FYVE/PHD"/>
</dbReference>
<dbReference type="PANTHER" id="PTHR10694">
    <property type="entry name" value="LYSINE-SPECIFIC DEMETHYLASE"/>
    <property type="match status" value="1"/>
</dbReference>
<dbReference type="PANTHER" id="PTHR10694:SF113">
    <property type="entry name" value="PROTEIN JUMONJI"/>
    <property type="match status" value="1"/>
</dbReference>
<dbReference type="Pfam" id="PF02373">
    <property type="entry name" value="JmjC"/>
    <property type="match status" value="1"/>
</dbReference>
<dbReference type="Pfam" id="PF00628">
    <property type="entry name" value="PHD"/>
    <property type="match status" value="1"/>
</dbReference>
<dbReference type="Pfam" id="PF08429">
    <property type="entry name" value="PLU-1"/>
    <property type="match status" value="1"/>
</dbReference>
<dbReference type="Pfam" id="PF02928">
    <property type="entry name" value="zf-C5HC2"/>
    <property type="match status" value="1"/>
</dbReference>
<dbReference type="SMART" id="SM00558">
    <property type="entry name" value="JmjC"/>
    <property type="match status" value="1"/>
</dbReference>
<dbReference type="SMART" id="SM00545">
    <property type="entry name" value="JmjN"/>
    <property type="match status" value="1"/>
</dbReference>
<dbReference type="SMART" id="SM00249">
    <property type="entry name" value="PHD"/>
    <property type="match status" value="3"/>
</dbReference>
<dbReference type="SUPFAM" id="SSF51197">
    <property type="entry name" value="Clavaminate synthase-like"/>
    <property type="match status" value="1"/>
</dbReference>
<dbReference type="SUPFAM" id="SSF57903">
    <property type="entry name" value="FYVE/PHD zinc finger"/>
    <property type="match status" value="3"/>
</dbReference>
<dbReference type="PROSITE" id="PS51184">
    <property type="entry name" value="JMJC"/>
    <property type="match status" value="1"/>
</dbReference>
<dbReference type="PROSITE" id="PS51183">
    <property type="entry name" value="JMJN"/>
    <property type="match status" value="1"/>
</dbReference>
<dbReference type="PROSITE" id="PS01359">
    <property type="entry name" value="ZF_PHD_1"/>
    <property type="match status" value="3"/>
</dbReference>
<dbReference type="PROSITE" id="PS50016">
    <property type="entry name" value="ZF_PHD_2"/>
    <property type="match status" value="2"/>
</dbReference>